<dbReference type="EC" id="3.2.2.27" evidence="1 2"/>
<dbReference type="EMBL" id="AB109239">
    <property type="protein sequence ID" value="BAC79245.1"/>
    <property type="molecule type" value="Genomic_DNA"/>
</dbReference>
<dbReference type="EMBL" id="AP008226">
    <property type="protein sequence ID" value="BAD70541.1"/>
    <property type="molecule type" value="Genomic_DNA"/>
</dbReference>
<dbReference type="RefSeq" id="WP_011228142.1">
    <property type="nucleotide sequence ID" value="NC_006461.1"/>
</dbReference>
<dbReference type="RefSeq" id="YP_143984.1">
    <property type="nucleotide sequence ID" value="NC_006461.1"/>
</dbReference>
<dbReference type="PDB" id="1UI0">
    <property type="method" value="X-ray"/>
    <property type="resolution" value="1.50 A"/>
    <property type="chains" value="A=1-205"/>
</dbReference>
<dbReference type="PDB" id="1UI1">
    <property type="method" value="X-ray"/>
    <property type="resolution" value="2.80 A"/>
    <property type="chains" value="A=1-205"/>
</dbReference>
<dbReference type="PDBsum" id="1UI0"/>
<dbReference type="PDBsum" id="1UI1"/>
<dbReference type="SMR" id="Q5SKC5"/>
<dbReference type="DrugBank" id="DB03419">
    <property type="generic name" value="Uracil"/>
</dbReference>
<dbReference type="EnsemblBacteria" id="BAD70541">
    <property type="protein sequence ID" value="BAD70541"/>
    <property type="gene ID" value="BAD70541"/>
</dbReference>
<dbReference type="GeneID" id="3169183"/>
<dbReference type="KEGG" id="ttj:TTHA0718"/>
<dbReference type="PATRIC" id="fig|300852.9.peg.711"/>
<dbReference type="eggNOG" id="COG1573">
    <property type="taxonomic scope" value="Bacteria"/>
</dbReference>
<dbReference type="HOGENOM" id="CLU_044815_1_3_0"/>
<dbReference type="PhylomeDB" id="Q5SKC5"/>
<dbReference type="BRENDA" id="3.2.2.27">
    <property type="organism ID" value="2305"/>
</dbReference>
<dbReference type="SABIO-RK" id="Q5SKC5"/>
<dbReference type="EvolutionaryTrace" id="Q5SKC5"/>
<dbReference type="Proteomes" id="UP000000532">
    <property type="component" value="Chromosome"/>
</dbReference>
<dbReference type="GO" id="GO:0051539">
    <property type="term" value="F:4 iron, 4 sulfur cluster binding"/>
    <property type="evidence" value="ECO:0000314"/>
    <property type="project" value="UniProtKB"/>
</dbReference>
<dbReference type="GO" id="GO:0046872">
    <property type="term" value="F:metal ion binding"/>
    <property type="evidence" value="ECO:0007669"/>
    <property type="project" value="UniProtKB-KW"/>
</dbReference>
<dbReference type="GO" id="GO:0004844">
    <property type="term" value="F:uracil DNA N-glycosylase activity"/>
    <property type="evidence" value="ECO:0000314"/>
    <property type="project" value="UniProtKB"/>
</dbReference>
<dbReference type="GO" id="GO:0006281">
    <property type="term" value="P:DNA repair"/>
    <property type="evidence" value="ECO:0000314"/>
    <property type="project" value="UniProtKB"/>
</dbReference>
<dbReference type="CDD" id="cd10030">
    <property type="entry name" value="UDG-F4_TTUDGA_SPO1dp_like"/>
    <property type="match status" value="1"/>
</dbReference>
<dbReference type="FunFam" id="3.40.470.10:FF:000021">
    <property type="entry name" value="Type-4 uracil-DNA glycosylase"/>
    <property type="match status" value="1"/>
</dbReference>
<dbReference type="Gene3D" id="3.40.470.10">
    <property type="entry name" value="Uracil-DNA glycosylase-like domain"/>
    <property type="match status" value="1"/>
</dbReference>
<dbReference type="InterPro" id="IPR051536">
    <property type="entry name" value="UDG_Type-4/5"/>
</dbReference>
<dbReference type="InterPro" id="IPR005273">
    <property type="entry name" value="Ura-DNA_glyco_family4"/>
</dbReference>
<dbReference type="InterPro" id="IPR005122">
    <property type="entry name" value="Uracil-DNA_glycosylase-like"/>
</dbReference>
<dbReference type="InterPro" id="IPR036895">
    <property type="entry name" value="Uracil-DNA_glycosylase-like_sf"/>
</dbReference>
<dbReference type="NCBIfam" id="TIGR00758">
    <property type="entry name" value="UDG_fam4"/>
    <property type="match status" value="1"/>
</dbReference>
<dbReference type="PANTHER" id="PTHR33693:SF1">
    <property type="entry name" value="TYPE-4 URACIL-DNA GLYCOSYLASE"/>
    <property type="match status" value="1"/>
</dbReference>
<dbReference type="PANTHER" id="PTHR33693">
    <property type="entry name" value="TYPE-5 URACIL-DNA GLYCOSYLASE"/>
    <property type="match status" value="1"/>
</dbReference>
<dbReference type="Pfam" id="PF03167">
    <property type="entry name" value="UDG"/>
    <property type="match status" value="1"/>
</dbReference>
<dbReference type="SMART" id="SM00986">
    <property type="entry name" value="UDG"/>
    <property type="match status" value="1"/>
</dbReference>
<dbReference type="SMART" id="SM00987">
    <property type="entry name" value="UreE_C"/>
    <property type="match status" value="1"/>
</dbReference>
<dbReference type="SUPFAM" id="SSF52141">
    <property type="entry name" value="Uracil-DNA glycosylase-like"/>
    <property type="match status" value="1"/>
</dbReference>
<organism>
    <name type="scientific">Thermus thermophilus (strain ATCC 27634 / DSM 579 / HB8)</name>
    <dbReference type="NCBI Taxonomy" id="300852"/>
    <lineage>
        <taxon>Bacteria</taxon>
        <taxon>Thermotogati</taxon>
        <taxon>Deinococcota</taxon>
        <taxon>Deinococci</taxon>
        <taxon>Thermales</taxon>
        <taxon>Thermaceae</taxon>
        <taxon>Thermus</taxon>
    </lineage>
</organism>
<feature type="chain" id="PRO_0000439182" description="Type-4 uracil-DNA glycosylase">
    <location>
        <begin position="1"/>
        <end position="205"/>
    </location>
</feature>
<feature type="binding site" evidence="2 8 9">
    <location>
        <position position="13"/>
    </location>
    <ligand>
        <name>[4Fe-4S] cluster</name>
        <dbReference type="ChEBI" id="CHEBI:49883"/>
    </ligand>
</feature>
<feature type="binding site" evidence="2 8 9">
    <location>
        <position position="16"/>
    </location>
    <ligand>
        <name>[4Fe-4S] cluster</name>
        <dbReference type="ChEBI" id="CHEBI:49883"/>
    </ligand>
</feature>
<feature type="binding site" evidence="2">
    <location>
        <begin position="40"/>
        <end position="42"/>
    </location>
    <ligand>
        <name>uracil</name>
        <dbReference type="ChEBI" id="CHEBI:17568"/>
    </ligand>
</feature>
<feature type="binding site" evidence="2">
    <location>
        <position position="54"/>
    </location>
    <ligand>
        <name>uracil</name>
        <dbReference type="ChEBI" id="CHEBI:17568"/>
    </ligand>
</feature>
<feature type="binding site" evidence="2">
    <location>
        <position position="80"/>
    </location>
    <ligand>
        <name>uracil</name>
        <dbReference type="ChEBI" id="CHEBI:17568"/>
    </ligand>
</feature>
<feature type="binding site" evidence="2 8 9">
    <location>
        <position position="84"/>
    </location>
    <ligand>
        <name>[4Fe-4S] cluster</name>
        <dbReference type="ChEBI" id="CHEBI:49883"/>
    </ligand>
</feature>
<feature type="binding site" evidence="2 8 9">
    <location>
        <position position="100"/>
    </location>
    <ligand>
        <name>[4Fe-4S] cluster</name>
        <dbReference type="ChEBI" id="CHEBI:49883"/>
    </ligand>
</feature>
<feature type="binding site" evidence="2">
    <location>
        <position position="155"/>
    </location>
    <ligand>
        <name>uracil</name>
        <dbReference type="ChEBI" id="CHEBI:17568"/>
    </ligand>
</feature>
<feature type="helix" evidence="10">
    <location>
        <begin position="3"/>
        <end position="10"/>
    </location>
</feature>
<feature type="helix" evidence="10">
    <location>
        <begin position="17"/>
        <end position="19"/>
    </location>
</feature>
<feature type="strand" evidence="10">
    <location>
        <begin position="35"/>
        <end position="41"/>
    </location>
</feature>
<feature type="helix" evidence="10">
    <location>
        <begin position="45"/>
        <end position="50"/>
    </location>
</feature>
<feature type="helix" evidence="10">
    <location>
        <begin position="57"/>
        <end position="69"/>
    </location>
</feature>
<feature type="helix" evidence="10">
    <location>
        <begin position="73"/>
        <end position="75"/>
    </location>
</feature>
<feature type="strand" evidence="10">
    <location>
        <begin position="76"/>
        <end position="81"/>
    </location>
</feature>
<feature type="helix" evidence="10">
    <location>
        <begin position="87"/>
        <end position="89"/>
    </location>
</feature>
<feature type="helix" evidence="10">
    <location>
        <begin position="94"/>
        <end position="103"/>
    </location>
</feature>
<feature type="helix" evidence="10">
    <location>
        <begin position="105"/>
        <end position="112"/>
    </location>
</feature>
<feature type="strand" evidence="10">
    <location>
        <begin position="115"/>
        <end position="121"/>
    </location>
</feature>
<feature type="helix" evidence="10">
    <location>
        <begin position="122"/>
        <end position="129"/>
    </location>
</feature>
<feature type="helix" evidence="10">
    <location>
        <begin position="135"/>
        <end position="138"/>
    </location>
</feature>
<feature type="strand" evidence="10">
    <location>
        <begin position="143"/>
        <end position="145"/>
    </location>
</feature>
<feature type="strand" evidence="10">
    <location>
        <begin position="148"/>
        <end position="150"/>
    </location>
</feature>
<feature type="helix" evidence="10">
    <location>
        <begin position="156"/>
        <end position="161"/>
    </location>
</feature>
<feature type="helix" evidence="10">
    <location>
        <begin position="170"/>
        <end position="187"/>
    </location>
</feature>
<gene>
    <name evidence="6" type="primary">udg</name>
    <name evidence="7" type="ordered locus">TTHA0718</name>
</gene>
<sequence length="205" mass="22966">MTLELLQAQAQNCTACRLMEGRTRVVFGEGNPDAKLMIVGEGPGEEEDKTGRPFVGKAGQLLNRILEAAGIPREEVYITNIVKCRPPQNRAPLPDEAKICTDKWLLKQIELIAPQIIVPLGAVAAEFFLGEKVSITKVRGKWYEWHGIKVFPMFHPAYLLRNPSRAPGSPKHLTWLDIQEVKRALDALPPKERRPVKAVSQEPLF</sequence>
<name>UDGA_THET8</name>
<keyword id="KW-0002">3D-structure</keyword>
<keyword id="KW-0004">4Fe-4S</keyword>
<keyword id="KW-0227">DNA damage</keyword>
<keyword id="KW-0234">DNA repair</keyword>
<keyword id="KW-0378">Hydrolase</keyword>
<keyword id="KW-0408">Iron</keyword>
<keyword id="KW-0411">Iron-sulfur</keyword>
<keyword id="KW-0479">Metal-binding</keyword>
<keyword id="KW-1185">Reference proteome</keyword>
<reference evidence="8 9" key="1">
    <citation type="journal article" date="2003" name="J. Mol. Biol.">
        <title>Crystal structure of a family 4 uracil-DNA glycosylase from Thermus thermophilus HB8.</title>
        <authorList>
            <person name="Hoseki J."/>
            <person name="Okamoto A."/>
            <person name="Masui R."/>
            <person name="Shibata T."/>
            <person name="Inoue Y."/>
            <person name="Yokoyama S."/>
            <person name="Kuramitsu S."/>
        </authorList>
    </citation>
    <scope>NUCLEOTIDE SEQUENCE [GENOMIC DNA]</scope>
    <scope>FUNCTION</scope>
    <scope>CATALYTIC ACTIVITY</scope>
    <scope>IRON-SULFUR CLUSTER</scope>
    <scope>ACTIVITY REGULATION</scope>
    <scope>BIOPHYSICOCHEMICAL PROPERTIES</scope>
    <scope>SUBUNIT</scope>
    <scope>X-RAY CRYSTALLOGRAPHY (1.50 ANGSTROMS) IN COMPLEX WITH IRON-SULFUR (4FE-4S) AND URACIL</scope>
    <source>
        <strain>ATCC 27634 / DSM 579 / HB8</strain>
    </source>
</reference>
<reference key="2">
    <citation type="submission" date="2004-11" db="EMBL/GenBank/DDBJ databases">
        <title>Complete genome sequence of Thermus thermophilus HB8.</title>
        <authorList>
            <person name="Masui R."/>
            <person name="Kurokawa K."/>
            <person name="Nakagawa N."/>
            <person name="Tokunaga F."/>
            <person name="Koyama Y."/>
            <person name="Shibata T."/>
            <person name="Oshima T."/>
            <person name="Yokoyama S."/>
            <person name="Yasunaga T."/>
            <person name="Kuramitsu S."/>
        </authorList>
    </citation>
    <scope>NUCLEOTIDE SEQUENCE [LARGE SCALE GENOMIC DNA]</scope>
    <source>
        <strain>ATCC 27634 / DSM 579 / HB8</strain>
    </source>
</reference>
<reference key="3">
    <citation type="journal article" date="2002" name="Nucleic Acids Res.">
        <title>A novel type of uracil-DNA glycosylase mediating repair of hydrolytic DNA damage in the extremely thermophilic eubacterium Thermus thermophilus.</title>
        <authorList>
            <person name="Starkuviene V."/>
            <person name="Fritz H.J."/>
        </authorList>
    </citation>
    <scope>FUNCTION</scope>
    <scope>CATALYTIC ACTIVITY</scope>
    <source>
        <strain>HB27 / ATCC BAA-163 / DSM 7039</strain>
    </source>
</reference>
<evidence type="ECO:0000269" key="1">
    <source>
    </source>
</evidence>
<evidence type="ECO:0000269" key="2">
    <source>
    </source>
</evidence>
<evidence type="ECO:0000303" key="3">
    <source>
    </source>
</evidence>
<evidence type="ECO:0000303" key="4">
    <source>
    </source>
</evidence>
<evidence type="ECO:0000305" key="5"/>
<evidence type="ECO:0000312" key="6">
    <source>
        <dbReference type="EMBL" id="BAC79245.1"/>
    </source>
</evidence>
<evidence type="ECO:0000312" key="7">
    <source>
        <dbReference type="EMBL" id="BAD70541.1"/>
    </source>
</evidence>
<evidence type="ECO:0007744" key="8">
    <source>
        <dbReference type="PDB" id="1UI0"/>
    </source>
</evidence>
<evidence type="ECO:0007744" key="9">
    <source>
        <dbReference type="PDB" id="1UI1"/>
    </source>
</evidence>
<evidence type="ECO:0007829" key="10">
    <source>
        <dbReference type="PDB" id="1UI0"/>
    </source>
</evidence>
<comment type="function">
    <text evidence="1 2">Removes uracil bases that are present in DNA as a result of either deamination of cytosine or misincorporation of dUMP instead of dTMP. Can remove uracil from double-stranded DNA containing either a U/G, U/A, U/C or U/T base pair as well as from single-stranded DNA (PubMed:12000829, PubMed:14556741). Specifically recognizes uracil that is flipped out from double-stranded DNA (PubMed:14556741).</text>
</comment>
<comment type="catalytic activity">
    <reaction evidence="1 2">
        <text>Hydrolyzes single-stranded DNA or mismatched double-stranded DNA and polynucleotides, releasing free uracil.</text>
        <dbReference type="EC" id="3.2.2.27"/>
    </reaction>
</comment>
<comment type="activity regulation">
    <text evidence="2">Product-inhibited by apurinic/apyrimidinic sites.</text>
</comment>
<comment type="biophysicochemical properties">
    <kinetics>
        <KM evidence="2">1 uM for G/U dsDNA</KM>
    </kinetics>
</comment>
<comment type="subunit">
    <text evidence="2">Monomer.</text>
</comment>
<comment type="miscellaneous">
    <text evidence="2">The 4Fe-4S cluster may have a structural rather than a catalytic role. Does not appear to be essential for enzyme activity.</text>
</comment>
<comment type="similarity">
    <text evidence="5">Belongs to the uracil-DNA glycosylase (UDG) superfamily. Type 4 (UDGa) family.</text>
</comment>
<proteinExistence type="evidence at protein level"/>
<protein>
    <recommendedName>
        <fullName evidence="5">Type-4 uracil-DNA glycosylase</fullName>
        <ecNumber evidence="1 2">3.2.2.27</ecNumber>
    </recommendedName>
    <alternativeName>
        <fullName evidence="3">TTUDGA</fullName>
    </alternativeName>
    <alternativeName>
        <fullName evidence="4">TthUDG</fullName>
    </alternativeName>
</protein>
<accession>Q5SKC5</accession>
<accession>Q7WYV4</accession>